<dbReference type="EMBL" id="CP000413">
    <property type="protein sequence ID" value="ABJ59774.1"/>
    <property type="molecule type" value="Genomic_DNA"/>
</dbReference>
<dbReference type="RefSeq" id="WP_003647760.1">
    <property type="nucleotide sequence ID" value="NZ_WBMG01000001.1"/>
</dbReference>
<dbReference type="SMR" id="Q045U8"/>
<dbReference type="KEGG" id="lga:LGAS_0369"/>
<dbReference type="HOGENOM" id="CLU_140930_1_1_9"/>
<dbReference type="BioCyc" id="LGAS324831:G1G6Y-368-MONOMER"/>
<dbReference type="Proteomes" id="UP000000664">
    <property type="component" value="Chromosome"/>
</dbReference>
<dbReference type="GO" id="GO:0043590">
    <property type="term" value="C:bacterial nucleoid"/>
    <property type="evidence" value="ECO:0007669"/>
    <property type="project" value="UniProtKB-UniRule"/>
</dbReference>
<dbReference type="GO" id="GO:0005829">
    <property type="term" value="C:cytosol"/>
    <property type="evidence" value="ECO:0007669"/>
    <property type="project" value="TreeGrafter"/>
</dbReference>
<dbReference type="GO" id="GO:0003677">
    <property type="term" value="F:DNA binding"/>
    <property type="evidence" value="ECO:0007669"/>
    <property type="project" value="UniProtKB-UniRule"/>
</dbReference>
<dbReference type="Gene3D" id="3.30.1310.10">
    <property type="entry name" value="Nucleoid-associated protein YbaB-like domain"/>
    <property type="match status" value="1"/>
</dbReference>
<dbReference type="HAMAP" id="MF_00274">
    <property type="entry name" value="DNA_YbaB_EbfC"/>
    <property type="match status" value="1"/>
</dbReference>
<dbReference type="InterPro" id="IPR036894">
    <property type="entry name" value="YbaB-like_sf"/>
</dbReference>
<dbReference type="InterPro" id="IPR004401">
    <property type="entry name" value="YbaB/EbfC"/>
</dbReference>
<dbReference type="NCBIfam" id="TIGR00103">
    <property type="entry name" value="DNA_YbaB_EbfC"/>
    <property type="match status" value="1"/>
</dbReference>
<dbReference type="PANTHER" id="PTHR33449">
    <property type="entry name" value="NUCLEOID-ASSOCIATED PROTEIN YBAB"/>
    <property type="match status" value="1"/>
</dbReference>
<dbReference type="PANTHER" id="PTHR33449:SF1">
    <property type="entry name" value="NUCLEOID-ASSOCIATED PROTEIN YBAB"/>
    <property type="match status" value="1"/>
</dbReference>
<dbReference type="Pfam" id="PF02575">
    <property type="entry name" value="YbaB_DNA_bd"/>
    <property type="match status" value="1"/>
</dbReference>
<dbReference type="PIRSF" id="PIRSF004555">
    <property type="entry name" value="UCP004555"/>
    <property type="match status" value="1"/>
</dbReference>
<dbReference type="SUPFAM" id="SSF82607">
    <property type="entry name" value="YbaB-like"/>
    <property type="match status" value="1"/>
</dbReference>
<evidence type="ECO:0000255" key="1">
    <source>
        <dbReference type="HAMAP-Rule" id="MF_00274"/>
    </source>
</evidence>
<feature type="chain" id="PRO_1000197661" description="Nucleoid-associated protein LGAS_0369">
    <location>
        <begin position="1"/>
        <end position="109"/>
    </location>
</feature>
<comment type="function">
    <text evidence="1">Binds to DNA and alters its conformation. May be involved in regulation of gene expression, nucleoid organization and DNA protection.</text>
</comment>
<comment type="subunit">
    <text evidence="1">Homodimer.</text>
</comment>
<comment type="subcellular location">
    <subcellularLocation>
        <location evidence="1">Cytoplasm</location>
        <location evidence="1">Nucleoid</location>
    </subcellularLocation>
</comment>
<comment type="similarity">
    <text evidence="1">Belongs to the YbaB/EbfC family.</text>
</comment>
<accession>Q045U8</accession>
<protein>
    <recommendedName>
        <fullName evidence="1">Nucleoid-associated protein LGAS_0369</fullName>
    </recommendedName>
</protein>
<sequence length="109" mass="11913">MSRRPNFGGMGMGNMQGLIKQAKKMQQQMEAEQANLATQEFVGKSADDMVVATFSGDRQLKDLKIDKEAIDPDDPDMLQDLVIDAVNKGIKAVDDATQASMGKYTKGLM</sequence>
<name>Y369_LACGA</name>
<organism>
    <name type="scientific">Lactobacillus gasseri (strain ATCC 33323 / DSM 20243 / BCRC 14619 / CIP 102991 / JCM 1131 / KCTC 3163 / NCIMB 11718 / NCTC 13722 / AM63)</name>
    <dbReference type="NCBI Taxonomy" id="324831"/>
    <lineage>
        <taxon>Bacteria</taxon>
        <taxon>Bacillati</taxon>
        <taxon>Bacillota</taxon>
        <taxon>Bacilli</taxon>
        <taxon>Lactobacillales</taxon>
        <taxon>Lactobacillaceae</taxon>
        <taxon>Lactobacillus</taxon>
    </lineage>
</organism>
<gene>
    <name type="ordered locus">LGAS_0369</name>
</gene>
<reference key="1">
    <citation type="journal article" date="2006" name="Proc. Natl. Acad. Sci. U.S.A.">
        <title>Comparative genomics of the lactic acid bacteria.</title>
        <authorList>
            <person name="Makarova K.S."/>
            <person name="Slesarev A."/>
            <person name="Wolf Y.I."/>
            <person name="Sorokin A."/>
            <person name="Mirkin B."/>
            <person name="Koonin E.V."/>
            <person name="Pavlov A."/>
            <person name="Pavlova N."/>
            <person name="Karamychev V."/>
            <person name="Polouchine N."/>
            <person name="Shakhova V."/>
            <person name="Grigoriev I."/>
            <person name="Lou Y."/>
            <person name="Rohksar D."/>
            <person name="Lucas S."/>
            <person name="Huang K."/>
            <person name="Goodstein D.M."/>
            <person name="Hawkins T."/>
            <person name="Plengvidhya V."/>
            <person name="Welker D."/>
            <person name="Hughes J."/>
            <person name="Goh Y."/>
            <person name="Benson A."/>
            <person name="Baldwin K."/>
            <person name="Lee J.-H."/>
            <person name="Diaz-Muniz I."/>
            <person name="Dosti B."/>
            <person name="Smeianov V."/>
            <person name="Wechter W."/>
            <person name="Barabote R."/>
            <person name="Lorca G."/>
            <person name="Altermann E."/>
            <person name="Barrangou R."/>
            <person name="Ganesan B."/>
            <person name="Xie Y."/>
            <person name="Rawsthorne H."/>
            <person name="Tamir D."/>
            <person name="Parker C."/>
            <person name="Breidt F."/>
            <person name="Broadbent J.R."/>
            <person name="Hutkins R."/>
            <person name="O'Sullivan D."/>
            <person name="Steele J."/>
            <person name="Unlu G."/>
            <person name="Saier M.H. Jr."/>
            <person name="Klaenhammer T."/>
            <person name="Richardson P."/>
            <person name="Kozyavkin S."/>
            <person name="Weimer B.C."/>
            <person name="Mills D.A."/>
        </authorList>
    </citation>
    <scope>NUCLEOTIDE SEQUENCE [LARGE SCALE GENOMIC DNA]</scope>
    <source>
        <strain>ATCC 33323 / DSM 20243 / BCRC 14619 / CIP 102991 / JCM 1131 / KCTC 3163 / NCIMB 11718 / NCTC 13722 / AM63</strain>
    </source>
</reference>
<proteinExistence type="inferred from homology"/>
<keyword id="KW-0963">Cytoplasm</keyword>
<keyword id="KW-0238">DNA-binding</keyword>